<reference evidence="10" key="1">
    <citation type="journal article" date="2002" name="J. Biol. Chem.">
        <title>A mosquito salivary protein inhibits activation of the plasma contact system by binding to factor XII and high molecular weight kininogen.</title>
        <authorList>
            <person name="Isawa H."/>
            <person name="Yuda M."/>
            <person name="Orito Y."/>
            <person name="Chinzei Y."/>
        </authorList>
    </citation>
    <scope>NUCLEOTIDE SEQUENCE [MRNA]</scope>
    <scope>FUNCTION</scope>
    <scope>ACTIVITY REGULATION</scope>
    <scope>INTERACTION WITH HOST F12 AND KNG1</scope>
    <scope>TISSUE SPECIFICITY</scope>
    <source>
        <tissue evidence="6">Salivary gland</tissue>
    </source>
</reference>
<reference evidence="11" key="2">
    <citation type="journal article" date="2014" name="Genome Biol.">
        <title>Genome analysis of a major urban malaria vector mosquito, Anopheles stephensi.</title>
        <authorList>
            <person name="Jiang X."/>
            <person name="Peery A."/>
            <person name="Hall A.B."/>
            <person name="Sharma A."/>
            <person name="Chen X.G."/>
            <person name="Waterhouse R.M."/>
            <person name="Komissarov A."/>
            <person name="Riehle M.M."/>
            <person name="Shouche Y."/>
            <person name="Sharakhova M.V."/>
            <person name="Lawson D."/>
            <person name="Pakpour N."/>
            <person name="Arensburger P."/>
            <person name="Davidson V.L."/>
            <person name="Eiglmeier K."/>
            <person name="Emrich S."/>
            <person name="George P."/>
            <person name="Kennedy R.C."/>
            <person name="Mane S.P."/>
            <person name="Maslen G."/>
            <person name="Oringanje C."/>
            <person name="Qi Y."/>
            <person name="Settlage R."/>
            <person name="Tojo M."/>
            <person name="Tubio J.M."/>
            <person name="Unger M.F."/>
            <person name="Wang B."/>
            <person name="Vernick K.D."/>
            <person name="Ribeiro J.M."/>
            <person name="James A.A."/>
            <person name="Michel K."/>
            <person name="Riehle M.A."/>
            <person name="Luckhart S."/>
            <person name="Sharakhov I.V."/>
            <person name="Tu Z."/>
        </authorList>
    </citation>
    <scope>NUCLEOTIDE SEQUENCE [LARGE SCALE GENOMIC DNA]</scope>
    <source>
        <strain evidence="11">Indian</strain>
    </source>
</reference>
<reference evidence="9" key="3">
    <citation type="journal article" date="2002" name="Insect Mol. Biol.">
        <title>The D7 family of salivary proteins in blood sucking diptera.</title>
        <authorList>
            <person name="Valenzuela J.G."/>
            <person name="Charlab R."/>
            <person name="Gonzalez E.C."/>
            <person name="de Miranda-Santos I.K.F."/>
            <person name="Marinotti O."/>
            <person name="Francischetti I.M.B."/>
            <person name="Ribeiro J.M.C."/>
        </authorList>
    </citation>
    <scope>NUCLEOTIDE SEQUENCE [LARGE SCALE MRNA]</scope>
</reference>
<reference key="4">
    <citation type="journal article" date="2007" name="FEBS J.">
        <title>Identification and characterization of plasma kallikrein-kinin system inhibitors from salivary glands of the blood-sucking insect Triatoma infestans.</title>
        <authorList>
            <person name="Isawa H."/>
            <person name="Orito Y."/>
            <person name="Jingushi N."/>
            <person name="Iwanaga S."/>
            <person name="Morita A."/>
            <person name="Chinzei Y."/>
            <person name="Yuda M."/>
        </authorList>
    </citation>
    <scope>INTERACTION WITH HOST F12 AND KNG1</scope>
</reference>
<comment type="function">
    <text evidence="1 3">Salivary protein with anticoagulant activity that targets the intrinsic blood coagulation pathway in the host (PubMed:12011093). Inhibits activation of the host plasma contact system by preventing the reciprocal activation of host coagulation factor XII (F12) and prekallikrein (KLKB1) (PubMed:12011093). Attenuates generation of bradykinin in host plasma (PubMed:12011093). May bind and sequester different mediators involved in the host response, such as serotonin and histamine (By similarity).</text>
</comment>
<comment type="activity regulation">
    <text evidence="3">Zn(2+) modulates binding to host coagulation factor XII (F12) and high molecular weight kininogen (KNG1).</text>
</comment>
<comment type="subunit">
    <text evidence="3 4">Interacts with host coagulation factor XII (F12) (inactive and activated) (via amino acids 1-77) (PubMed:12011093, PubMed:17645545). Interacts with host high molecular weight kininogen (KNG1) (via amino acids 402-532) (PubMed:12011093, PubMed:17645545).</text>
</comment>
<comment type="subcellular location">
    <subcellularLocation>
        <location evidence="8">Secreted</location>
    </subcellularLocation>
</comment>
<comment type="tissue specificity">
    <text evidence="3">Female salivary gland (at protein level).</text>
</comment>
<comment type="similarity">
    <text evidence="8">Belongs to the PBP/GOBP family.</text>
</comment>
<evidence type="ECO:0000250" key="1">
    <source>
        <dbReference type="UniProtKB" id="Q9UB30"/>
    </source>
</evidence>
<evidence type="ECO:0000255" key="2"/>
<evidence type="ECO:0000269" key="3">
    <source>
    </source>
</evidence>
<evidence type="ECO:0000269" key="4">
    <source>
    </source>
</evidence>
<evidence type="ECO:0000303" key="5">
    <source>
    </source>
</evidence>
<evidence type="ECO:0000303" key="6">
    <source>
    </source>
</evidence>
<evidence type="ECO:0000303" key="7">
    <source>
    </source>
</evidence>
<evidence type="ECO:0000305" key="8"/>
<evidence type="ECO:0000312" key="9">
    <source>
        <dbReference type="EMBL" id="AAL16045.1"/>
    </source>
</evidence>
<evidence type="ECO:0000312" key="10">
    <source>
        <dbReference type="EMBL" id="AAM12343.1"/>
    </source>
</evidence>
<evidence type="ECO:0000312" key="11">
    <source>
        <dbReference type="Proteomes" id="UP000076408"/>
    </source>
</evidence>
<proteinExistence type="evidence at protein level"/>
<dbReference type="EMBL" id="AF420268">
    <property type="protein sequence ID" value="AAL16045.1"/>
    <property type="molecule type" value="mRNA"/>
</dbReference>
<dbReference type="EMBL" id="AY091601">
    <property type="protein sequence ID" value="AAM12343.1"/>
    <property type="molecule type" value="mRNA"/>
</dbReference>
<dbReference type="SMR" id="Q95V94"/>
<dbReference type="EnsemblMetazoa" id="ASTE016512-RA">
    <property type="protein sequence ID" value="ASTE016512-PA"/>
    <property type="gene ID" value="ASTE016512"/>
</dbReference>
<dbReference type="EnsemblMetazoa" id="ASTEI02995-RA">
    <property type="protein sequence ID" value="ASTEI02995-PA"/>
    <property type="gene ID" value="ASTEI02995"/>
</dbReference>
<dbReference type="VEuPathDB" id="VectorBase:ASTE016512"/>
<dbReference type="VEuPathDB" id="VectorBase:ASTEI02995"/>
<dbReference type="VEuPathDB" id="VectorBase:ASTEI20_035815"/>
<dbReference type="OMA" id="CEKKMPA"/>
<dbReference type="OrthoDB" id="7721886at2759"/>
<dbReference type="Proteomes" id="UP000076408">
    <property type="component" value="Unassembled WGS sequence"/>
</dbReference>
<dbReference type="GO" id="GO:0005576">
    <property type="term" value="C:extracellular region"/>
    <property type="evidence" value="ECO:0007669"/>
    <property type="project" value="UniProtKB-SubCell"/>
</dbReference>
<dbReference type="GO" id="GO:0005549">
    <property type="term" value="F:odorant binding"/>
    <property type="evidence" value="ECO:0007669"/>
    <property type="project" value="InterPro"/>
</dbReference>
<dbReference type="GO" id="GO:0140311">
    <property type="term" value="F:protein sequestering activity"/>
    <property type="evidence" value="ECO:0000314"/>
    <property type="project" value="UniProtKB"/>
</dbReference>
<dbReference type="GO" id="GO:0090729">
    <property type="term" value="F:toxin activity"/>
    <property type="evidence" value="ECO:0007669"/>
    <property type="project" value="UniProtKB-KW"/>
</dbReference>
<dbReference type="GO" id="GO:0035899">
    <property type="term" value="P:suppression of blood coagulation in another organism"/>
    <property type="evidence" value="ECO:0000314"/>
    <property type="project" value="UniProtKB"/>
</dbReference>
<dbReference type="CDD" id="cd23992">
    <property type="entry name" value="PBP_GOBP"/>
    <property type="match status" value="1"/>
</dbReference>
<dbReference type="FunFam" id="1.10.238.20:FF:000008">
    <property type="entry name" value="D7-related 4 protein"/>
    <property type="match status" value="1"/>
</dbReference>
<dbReference type="Gene3D" id="1.10.238.20">
    <property type="entry name" value="Pheromone/general odorant binding protein domain"/>
    <property type="match status" value="1"/>
</dbReference>
<dbReference type="InterPro" id="IPR006170">
    <property type="entry name" value="PBP/GOBP"/>
</dbReference>
<dbReference type="InterPro" id="IPR036728">
    <property type="entry name" value="PBP_GOBP_sf"/>
</dbReference>
<dbReference type="Pfam" id="PF01395">
    <property type="entry name" value="PBP_GOBP"/>
    <property type="match status" value="1"/>
</dbReference>
<dbReference type="SMART" id="SM00708">
    <property type="entry name" value="PhBP"/>
    <property type="match status" value="1"/>
</dbReference>
<dbReference type="SUPFAM" id="SSF47565">
    <property type="entry name" value="Insect pheromone/odorant-binding proteins"/>
    <property type="match status" value="1"/>
</dbReference>
<name>D7R1_ANOST</name>
<sequence>MFRKVFSVALVTCGLLVIVQAAKKVEQCEKRIPDSLKPKLCQIRQYQLLEGADMEKHIDCVMRALGFVHPDGSGNYHALIEPLNAIDKDRKHGFNLETCGGNRDKLPKRKRAYAFYKCMLKSTSADSFKKAFDLKELVNAGKLSATAKYSPQVDTLMAQIDGMICK</sequence>
<accession>Q95V94</accession>
<accession>Q8MTP1</accession>
<protein>
    <recommendedName>
        <fullName evidence="1">Short form salivary protein D7R1</fullName>
    </recommendedName>
    <alternativeName>
        <fullName evidence="6 7">Hamadarin</fullName>
    </alternativeName>
    <alternativeName>
        <fullName evidence="5">Short form salivary protein D7clu5</fullName>
        <shortName evidence="5">AnSt-D7clu5</shortName>
    </alternativeName>
</protein>
<feature type="signal peptide" evidence="2">
    <location>
        <begin position="1"/>
        <end position="21"/>
    </location>
</feature>
<feature type="chain" id="PRO_5014589233" description="Short form salivary protein D7R1" evidence="2">
    <location>
        <begin position="22"/>
        <end position="166"/>
    </location>
</feature>
<feature type="sequence conflict" description="In Ref. 1; AAM12343." evidence="8" ref="1">
    <original>V</original>
    <variation>I</variation>
    <location>
        <position position="17"/>
    </location>
</feature>
<feature type="sequence conflict" description="In Ref. 1; AAM12343." evidence="8" ref="1">
    <original>P</original>
    <variation>H</variation>
    <location>
        <position position="38"/>
    </location>
</feature>
<feature type="sequence conflict" description="In Ref. 1; AAM12343." evidence="8" ref="1">
    <original>DK</original>
    <variation>NN</variation>
    <location>
        <begin position="104"/>
        <end position="105"/>
    </location>
</feature>
<feature type="sequence conflict" description="In Ref. 1; AAM12343." evidence="8" ref="1">
    <original>A</original>
    <variation>T</variation>
    <location>
        <position position="131"/>
    </location>
</feature>
<feature type="sequence conflict" description="In Ref. 1; AAM12343." evidence="8" ref="1">
    <original>G</original>
    <variation>S</variation>
    <location>
        <position position="162"/>
    </location>
</feature>
<organism evidence="9">
    <name type="scientific">Anopheles stephensi</name>
    <name type="common">Indo-Pakistan malaria mosquito</name>
    <dbReference type="NCBI Taxonomy" id="30069"/>
    <lineage>
        <taxon>Eukaryota</taxon>
        <taxon>Metazoa</taxon>
        <taxon>Ecdysozoa</taxon>
        <taxon>Arthropoda</taxon>
        <taxon>Hexapoda</taxon>
        <taxon>Insecta</taxon>
        <taxon>Pterygota</taxon>
        <taxon>Neoptera</taxon>
        <taxon>Endopterygota</taxon>
        <taxon>Diptera</taxon>
        <taxon>Nematocera</taxon>
        <taxon>Culicoidea</taxon>
        <taxon>Culicidae</taxon>
        <taxon>Anophelinae</taxon>
        <taxon>Anopheles</taxon>
    </lineage>
</organism>
<keyword id="KW-1203">Blood coagulation cascade inhibiting toxin</keyword>
<keyword id="KW-1199">Hemostasis impairing toxin</keyword>
<keyword id="KW-1185">Reference proteome</keyword>
<keyword id="KW-0964">Secreted</keyword>
<keyword id="KW-0732">Signal</keyword>
<keyword id="KW-0800">Toxin</keyword>